<feature type="chain" id="PRO_1000116006" description="Probable GTP-binding protein EngB">
    <location>
        <begin position="1"/>
        <end position="200"/>
    </location>
</feature>
<feature type="domain" description="EngB-type G" evidence="1">
    <location>
        <begin position="24"/>
        <end position="199"/>
    </location>
</feature>
<feature type="binding site" evidence="1">
    <location>
        <begin position="32"/>
        <end position="39"/>
    </location>
    <ligand>
        <name>GTP</name>
        <dbReference type="ChEBI" id="CHEBI:37565"/>
    </ligand>
</feature>
<feature type="binding site" evidence="1">
    <location>
        <position position="39"/>
    </location>
    <ligand>
        <name>Mg(2+)</name>
        <dbReference type="ChEBI" id="CHEBI:18420"/>
    </ligand>
</feature>
<feature type="binding site" evidence="1">
    <location>
        <begin position="59"/>
        <end position="63"/>
    </location>
    <ligand>
        <name>GTP</name>
        <dbReference type="ChEBI" id="CHEBI:37565"/>
    </ligand>
</feature>
<feature type="binding site" evidence="1">
    <location>
        <position position="61"/>
    </location>
    <ligand>
        <name>Mg(2+)</name>
        <dbReference type="ChEBI" id="CHEBI:18420"/>
    </ligand>
</feature>
<feature type="binding site" evidence="1">
    <location>
        <begin position="77"/>
        <end position="80"/>
    </location>
    <ligand>
        <name>GTP</name>
        <dbReference type="ChEBI" id="CHEBI:37565"/>
    </ligand>
</feature>
<feature type="binding site" evidence="1">
    <location>
        <begin position="144"/>
        <end position="147"/>
    </location>
    <ligand>
        <name>GTP</name>
        <dbReference type="ChEBI" id="CHEBI:37565"/>
    </ligand>
</feature>
<feature type="binding site" evidence="1">
    <location>
        <begin position="178"/>
        <end position="180"/>
    </location>
    <ligand>
        <name>GTP</name>
        <dbReference type="ChEBI" id="CHEBI:37565"/>
    </ligand>
</feature>
<accession>B2FTY5</accession>
<name>ENGB_STRMK</name>
<proteinExistence type="inferred from homology"/>
<comment type="function">
    <text evidence="1">Necessary for normal cell division and for the maintenance of normal septation.</text>
</comment>
<comment type="cofactor">
    <cofactor evidence="1">
        <name>Mg(2+)</name>
        <dbReference type="ChEBI" id="CHEBI:18420"/>
    </cofactor>
</comment>
<comment type="similarity">
    <text evidence="1">Belongs to the TRAFAC class TrmE-Era-EngA-EngB-Septin-like GTPase superfamily. EngB GTPase family.</text>
</comment>
<reference key="1">
    <citation type="journal article" date="2008" name="Genome Biol.">
        <title>The complete genome, comparative and functional analysis of Stenotrophomonas maltophilia reveals an organism heavily shielded by drug resistance determinants.</title>
        <authorList>
            <person name="Crossman L.C."/>
            <person name="Gould V.C."/>
            <person name="Dow J.M."/>
            <person name="Vernikos G.S."/>
            <person name="Okazaki A."/>
            <person name="Sebaihia M."/>
            <person name="Saunders D."/>
            <person name="Arrowsmith C."/>
            <person name="Carver T."/>
            <person name="Peters N."/>
            <person name="Adlem E."/>
            <person name="Kerhornou A."/>
            <person name="Lord A."/>
            <person name="Murphy L."/>
            <person name="Seeger K."/>
            <person name="Squares R."/>
            <person name="Rutter S."/>
            <person name="Quail M.A."/>
            <person name="Rajandream M.A."/>
            <person name="Harris D."/>
            <person name="Churcher C."/>
            <person name="Bentley S.D."/>
            <person name="Parkhill J."/>
            <person name="Thomson N.R."/>
            <person name="Avison M.B."/>
        </authorList>
    </citation>
    <scope>NUCLEOTIDE SEQUENCE [LARGE SCALE GENOMIC DNA]</scope>
    <source>
        <strain>K279a</strain>
    </source>
</reference>
<organism>
    <name type="scientific">Stenotrophomonas maltophilia (strain K279a)</name>
    <dbReference type="NCBI Taxonomy" id="522373"/>
    <lineage>
        <taxon>Bacteria</taxon>
        <taxon>Pseudomonadati</taxon>
        <taxon>Pseudomonadota</taxon>
        <taxon>Gammaproteobacteria</taxon>
        <taxon>Lysobacterales</taxon>
        <taxon>Lysobacteraceae</taxon>
        <taxon>Stenotrophomonas</taxon>
        <taxon>Stenotrophomonas maltophilia group</taxon>
    </lineage>
</organism>
<keyword id="KW-0131">Cell cycle</keyword>
<keyword id="KW-0132">Cell division</keyword>
<keyword id="KW-0342">GTP-binding</keyword>
<keyword id="KW-0460">Magnesium</keyword>
<keyword id="KW-0479">Metal-binding</keyword>
<keyword id="KW-0547">Nucleotide-binding</keyword>
<keyword id="KW-1185">Reference proteome</keyword>
<keyword id="KW-0717">Septation</keyword>
<sequence length="200" mass="22256">MSLLIERARYHLSAHNVRQLPPDEGAEVAFAGRSNAGKSSALNALTRQNALARVSKTPGRTQQLVFFQVTPEAHLVDLPGYGYAKVPLDLQAHWQAFIDKYFRTREALKGLVVVMDIRHPLKDYDRQMLSYAVQRGLPAHALLTKADKLSRSQQMQSLQKVRKELQSAYGDSVSVQVFSGEDRTGVDEARGVIGGWLGLE</sequence>
<gene>
    <name evidence="1" type="primary">engB</name>
    <name type="ordered locus">Smlt3992</name>
</gene>
<evidence type="ECO:0000255" key="1">
    <source>
        <dbReference type="HAMAP-Rule" id="MF_00321"/>
    </source>
</evidence>
<dbReference type="EMBL" id="AM743169">
    <property type="protein sequence ID" value="CAQ47391.1"/>
    <property type="molecule type" value="Genomic_DNA"/>
</dbReference>
<dbReference type="SMR" id="B2FTY5"/>
<dbReference type="EnsemblBacteria" id="CAQ47391">
    <property type="protein sequence ID" value="CAQ47391"/>
    <property type="gene ID" value="Smlt3992"/>
</dbReference>
<dbReference type="KEGG" id="sml:Smlt3992"/>
<dbReference type="eggNOG" id="COG0218">
    <property type="taxonomic scope" value="Bacteria"/>
</dbReference>
<dbReference type="HOGENOM" id="CLU_033732_1_0_6"/>
<dbReference type="Proteomes" id="UP000008840">
    <property type="component" value="Chromosome"/>
</dbReference>
<dbReference type="GO" id="GO:0005829">
    <property type="term" value="C:cytosol"/>
    <property type="evidence" value="ECO:0007669"/>
    <property type="project" value="TreeGrafter"/>
</dbReference>
<dbReference type="GO" id="GO:0005525">
    <property type="term" value="F:GTP binding"/>
    <property type="evidence" value="ECO:0007669"/>
    <property type="project" value="UniProtKB-UniRule"/>
</dbReference>
<dbReference type="GO" id="GO:0046872">
    <property type="term" value="F:metal ion binding"/>
    <property type="evidence" value="ECO:0007669"/>
    <property type="project" value="UniProtKB-KW"/>
</dbReference>
<dbReference type="GO" id="GO:0000917">
    <property type="term" value="P:division septum assembly"/>
    <property type="evidence" value="ECO:0007669"/>
    <property type="project" value="UniProtKB-KW"/>
</dbReference>
<dbReference type="CDD" id="cd01876">
    <property type="entry name" value="YihA_EngB"/>
    <property type="match status" value="1"/>
</dbReference>
<dbReference type="FunFam" id="3.40.50.300:FF:000098">
    <property type="entry name" value="Probable GTP-binding protein EngB"/>
    <property type="match status" value="1"/>
</dbReference>
<dbReference type="Gene3D" id="3.40.50.300">
    <property type="entry name" value="P-loop containing nucleotide triphosphate hydrolases"/>
    <property type="match status" value="1"/>
</dbReference>
<dbReference type="HAMAP" id="MF_00321">
    <property type="entry name" value="GTPase_EngB"/>
    <property type="match status" value="1"/>
</dbReference>
<dbReference type="InterPro" id="IPR030393">
    <property type="entry name" value="G_ENGB_dom"/>
</dbReference>
<dbReference type="InterPro" id="IPR006073">
    <property type="entry name" value="GTP-bd"/>
</dbReference>
<dbReference type="InterPro" id="IPR019987">
    <property type="entry name" value="GTP-bd_ribosome_bio_YsxC"/>
</dbReference>
<dbReference type="InterPro" id="IPR027417">
    <property type="entry name" value="P-loop_NTPase"/>
</dbReference>
<dbReference type="NCBIfam" id="TIGR03598">
    <property type="entry name" value="GTPase_YsxC"/>
    <property type="match status" value="1"/>
</dbReference>
<dbReference type="PANTHER" id="PTHR11649:SF13">
    <property type="entry name" value="ENGB-TYPE G DOMAIN-CONTAINING PROTEIN"/>
    <property type="match status" value="1"/>
</dbReference>
<dbReference type="PANTHER" id="PTHR11649">
    <property type="entry name" value="MSS1/TRME-RELATED GTP-BINDING PROTEIN"/>
    <property type="match status" value="1"/>
</dbReference>
<dbReference type="Pfam" id="PF01926">
    <property type="entry name" value="MMR_HSR1"/>
    <property type="match status" value="1"/>
</dbReference>
<dbReference type="SUPFAM" id="SSF52540">
    <property type="entry name" value="P-loop containing nucleoside triphosphate hydrolases"/>
    <property type="match status" value="1"/>
</dbReference>
<dbReference type="PROSITE" id="PS51706">
    <property type="entry name" value="G_ENGB"/>
    <property type="match status" value="1"/>
</dbReference>
<protein>
    <recommendedName>
        <fullName evidence="1">Probable GTP-binding protein EngB</fullName>
    </recommendedName>
</protein>